<accession>Q465G4</accession>
<feature type="chain" id="PRO_1000022152" description="Isoleucine--tRNA ligase">
    <location>
        <begin position="1"/>
        <end position="1058"/>
    </location>
</feature>
<feature type="short sequence motif" description="'HIGH' region">
    <location>
        <begin position="48"/>
        <end position="58"/>
    </location>
</feature>
<feature type="short sequence motif" description="'KMSKS' region">
    <location>
        <begin position="596"/>
        <end position="600"/>
    </location>
</feature>
<feature type="binding site" evidence="1">
    <location>
        <position position="599"/>
    </location>
    <ligand>
        <name>ATP</name>
        <dbReference type="ChEBI" id="CHEBI:30616"/>
    </ligand>
</feature>
<evidence type="ECO:0000255" key="1">
    <source>
        <dbReference type="HAMAP-Rule" id="MF_02003"/>
    </source>
</evidence>
<name>SYI_METBF</name>
<dbReference type="EC" id="6.1.1.5" evidence="1"/>
<dbReference type="EMBL" id="CP000099">
    <property type="protein sequence ID" value="AAZ72478.1"/>
    <property type="molecule type" value="Genomic_DNA"/>
</dbReference>
<dbReference type="SMR" id="Q465G4"/>
<dbReference type="STRING" id="269797.Mbar_A3613"/>
<dbReference type="PaxDb" id="269797-Mbar_A3613"/>
<dbReference type="KEGG" id="mba:Mbar_A3613"/>
<dbReference type="eggNOG" id="arCOG00807">
    <property type="taxonomic scope" value="Archaea"/>
</dbReference>
<dbReference type="HOGENOM" id="CLU_001493_1_1_2"/>
<dbReference type="OrthoDB" id="30823at2157"/>
<dbReference type="GO" id="GO:0005737">
    <property type="term" value="C:cytoplasm"/>
    <property type="evidence" value="ECO:0007669"/>
    <property type="project" value="UniProtKB-SubCell"/>
</dbReference>
<dbReference type="GO" id="GO:0002161">
    <property type="term" value="F:aminoacyl-tRNA deacylase activity"/>
    <property type="evidence" value="ECO:0007669"/>
    <property type="project" value="InterPro"/>
</dbReference>
<dbReference type="GO" id="GO:0005524">
    <property type="term" value="F:ATP binding"/>
    <property type="evidence" value="ECO:0007669"/>
    <property type="project" value="UniProtKB-UniRule"/>
</dbReference>
<dbReference type="GO" id="GO:0004822">
    <property type="term" value="F:isoleucine-tRNA ligase activity"/>
    <property type="evidence" value="ECO:0007669"/>
    <property type="project" value="UniProtKB-UniRule"/>
</dbReference>
<dbReference type="GO" id="GO:0000049">
    <property type="term" value="F:tRNA binding"/>
    <property type="evidence" value="ECO:0007669"/>
    <property type="project" value="InterPro"/>
</dbReference>
<dbReference type="GO" id="GO:0008270">
    <property type="term" value="F:zinc ion binding"/>
    <property type="evidence" value="ECO:0007669"/>
    <property type="project" value="UniProtKB-UniRule"/>
</dbReference>
<dbReference type="GO" id="GO:0006428">
    <property type="term" value="P:isoleucyl-tRNA aminoacylation"/>
    <property type="evidence" value="ECO:0007669"/>
    <property type="project" value="UniProtKB-UniRule"/>
</dbReference>
<dbReference type="CDD" id="cd07961">
    <property type="entry name" value="Anticodon_Ia_Ile_ABEc"/>
    <property type="match status" value="1"/>
</dbReference>
<dbReference type="CDD" id="cd00818">
    <property type="entry name" value="IleRS_core"/>
    <property type="match status" value="1"/>
</dbReference>
<dbReference type="FunFam" id="3.40.50.620:FF:000286">
    <property type="entry name" value="Isoleucine--tRNA ligase"/>
    <property type="match status" value="1"/>
</dbReference>
<dbReference type="FunFam" id="1.10.730.10:FF:000033">
    <property type="entry name" value="Valine--tRNA ligase"/>
    <property type="match status" value="1"/>
</dbReference>
<dbReference type="Gene3D" id="3.30.720.200">
    <property type="match status" value="1"/>
</dbReference>
<dbReference type="Gene3D" id="3.40.50.620">
    <property type="entry name" value="HUPs"/>
    <property type="match status" value="2"/>
</dbReference>
<dbReference type="Gene3D" id="1.10.730.10">
    <property type="entry name" value="Isoleucyl-tRNA Synthetase, Domain 1"/>
    <property type="match status" value="1"/>
</dbReference>
<dbReference type="Gene3D" id="3.90.740.10">
    <property type="entry name" value="Valyl/Leucyl/Isoleucyl-tRNA synthetase, editing domain"/>
    <property type="match status" value="1"/>
</dbReference>
<dbReference type="HAMAP" id="MF_02003">
    <property type="entry name" value="Ile_tRNA_synth_type2"/>
    <property type="match status" value="1"/>
</dbReference>
<dbReference type="InterPro" id="IPR001412">
    <property type="entry name" value="aa-tRNA-synth_I_CS"/>
</dbReference>
<dbReference type="InterPro" id="IPR002300">
    <property type="entry name" value="aa-tRNA-synth_Ia"/>
</dbReference>
<dbReference type="InterPro" id="IPR033709">
    <property type="entry name" value="Anticodon_Ile_ABEc"/>
</dbReference>
<dbReference type="InterPro" id="IPR002301">
    <property type="entry name" value="Ile-tRNA-ligase"/>
</dbReference>
<dbReference type="InterPro" id="IPR023586">
    <property type="entry name" value="Ile-tRNA-ligase_type2"/>
</dbReference>
<dbReference type="InterPro" id="IPR013155">
    <property type="entry name" value="M/V/L/I-tRNA-synth_anticd-bd"/>
</dbReference>
<dbReference type="InterPro" id="IPR014729">
    <property type="entry name" value="Rossmann-like_a/b/a_fold"/>
</dbReference>
<dbReference type="InterPro" id="IPR009080">
    <property type="entry name" value="tRNAsynth_Ia_anticodon-bd"/>
</dbReference>
<dbReference type="InterPro" id="IPR009008">
    <property type="entry name" value="Val/Leu/Ile-tRNA-synth_edit"/>
</dbReference>
<dbReference type="NCBIfam" id="TIGR00392">
    <property type="entry name" value="ileS"/>
    <property type="match status" value="1"/>
</dbReference>
<dbReference type="PANTHER" id="PTHR42780:SF1">
    <property type="entry name" value="ISOLEUCINE--TRNA LIGASE, CYTOPLASMIC"/>
    <property type="match status" value="1"/>
</dbReference>
<dbReference type="PANTHER" id="PTHR42780">
    <property type="entry name" value="SOLEUCYL-TRNA SYNTHETASE"/>
    <property type="match status" value="1"/>
</dbReference>
<dbReference type="Pfam" id="PF08264">
    <property type="entry name" value="Anticodon_1"/>
    <property type="match status" value="1"/>
</dbReference>
<dbReference type="Pfam" id="PF19302">
    <property type="entry name" value="DUF5915"/>
    <property type="match status" value="1"/>
</dbReference>
<dbReference type="Pfam" id="PF00133">
    <property type="entry name" value="tRNA-synt_1"/>
    <property type="match status" value="1"/>
</dbReference>
<dbReference type="PRINTS" id="PR00984">
    <property type="entry name" value="TRNASYNTHILE"/>
</dbReference>
<dbReference type="SUPFAM" id="SSF47323">
    <property type="entry name" value="Anticodon-binding domain of a subclass of class I aminoacyl-tRNA synthetases"/>
    <property type="match status" value="1"/>
</dbReference>
<dbReference type="SUPFAM" id="SSF52374">
    <property type="entry name" value="Nucleotidylyl transferase"/>
    <property type="match status" value="1"/>
</dbReference>
<dbReference type="SUPFAM" id="SSF50677">
    <property type="entry name" value="ValRS/IleRS/LeuRS editing domain"/>
    <property type="match status" value="1"/>
</dbReference>
<dbReference type="PROSITE" id="PS00178">
    <property type="entry name" value="AA_TRNA_LIGASE_I"/>
    <property type="match status" value="1"/>
</dbReference>
<sequence>MIKEITAKYNAEQIEKKITQLWKDSDAYRKTREHRKTGKRLFFVDGPPYTTGHIHLGTAWNKIIKDSILRYYSMNNRNILERPGWDMHGLPIEVKVEGVLGFKSKKDIESFGVENFIEKCKEFAINQKQEMTEQFQRLGVWMQWEAPYMTLKDDYIEAAWWTLKQASEKNLLDVGKRSVNWCPRCETAIADSEVEYAERTDPSIYVKFKIKGEENTFIVIWTTTPWTIPANVAVAVHPGFEYSKFRAIRQDGSDEILIAATDLIENVLRQGRYVDYEVLETMLGEDLTKLEYESPVGDLVPVQNEIKHGIYLADYVTAENTGCVHIAPGHGMDDFNVGVKYNLPILCPVGPNGAYTEEAGEYAGKNVREANPIVIEDLRKRNRLLAEGTVTHRYGHCWRCKTPIIYLATEQWFLKVTDIKDKMLEAIDAVDWYPEWAGSARFRTWVEGARDWCISRQRYWGMPIPVWKCKKCGKLEVIGTKAELLEKSGAGSDVELHRPYVDKLTIPCECGGEKKRVEDVFDVWFDSAVASWATLKFPQTREQFDEWWPADFITEGHDQTRGWFYSQLGASMVGFGRAPYKSVLMHGFTLDAGGKKMSKSLGNVVSPIDVIDKYGADTLRAYVLSSSAPWDDLKFNQEEVENVHRSINILWNVFRFPLPYMALDNFDPLKVSLDSVKDALREEDRWILSRIQSVVKAVDEAMSGYFLHKAVREILEFTLEDLSRWYIQLIRPRTWTEADDPDKLAAYRVLYEVYVTLTKLISPFMPYLAEEMYQNLIRNVDPNALESVHMCDWPKVNEAYLDPELEAAMSTARSIVEAASNARQKAGRKLRWPVSRIVVSPESEDAAKAVERLRSVLMDQTNSKAIVLTPVGESWDELGLEVIPDPSKIGPVFKKDAGKVIPALQKVDGFALKKAFAEAGEFELSLADRTTVTVTPGMANFKETLPEGTASAESDAGLVYVDANLTPELEAEGYAREVIRRLQDMRKELDLVVDENIRVSVRIEDERVLRLVETLKDLIAEEVRAEILNLGSDIDVSGALVKDWDVEGIAMKMGISKK</sequence>
<reference key="1">
    <citation type="journal article" date="2006" name="J. Bacteriol.">
        <title>The Methanosarcina barkeri genome: comparative analysis with Methanosarcina acetivorans and Methanosarcina mazei reveals extensive rearrangement within methanosarcinal genomes.</title>
        <authorList>
            <person name="Maeder D.L."/>
            <person name="Anderson I."/>
            <person name="Brettin T.S."/>
            <person name="Bruce D.C."/>
            <person name="Gilna P."/>
            <person name="Han C.S."/>
            <person name="Lapidus A."/>
            <person name="Metcalf W.W."/>
            <person name="Saunders E."/>
            <person name="Tapia R."/>
            <person name="Sowers K.R."/>
        </authorList>
    </citation>
    <scope>NUCLEOTIDE SEQUENCE [LARGE SCALE GENOMIC DNA]</scope>
    <source>
        <strain>Fusaro / DSM 804</strain>
    </source>
</reference>
<organism>
    <name type="scientific">Methanosarcina barkeri (strain Fusaro / DSM 804)</name>
    <dbReference type="NCBI Taxonomy" id="269797"/>
    <lineage>
        <taxon>Archaea</taxon>
        <taxon>Methanobacteriati</taxon>
        <taxon>Methanobacteriota</taxon>
        <taxon>Stenosarchaea group</taxon>
        <taxon>Methanomicrobia</taxon>
        <taxon>Methanosarcinales</taxon>
        <taxon>Methanosarcinaceae</taxon>
        <taxon>Methanosarcina</taxon>
    </lineage>
</organism>
<proteinExistence type="inferred from homology"/>
<keyword id="KW-0030">Aminoacyl-tRNA synthetase</keyword>
<keyword id="KW-0067">ATP-binding</keyword>
<keyword id="KW-0963">Cytoplasm</keyword>
<keyword id="KW-0436">Ligase</keyword>
<keyword id="KW-0479">Metal-binding</keyword>
<keyword id="KW-0547">Nucleotide-binding</keyword>
<keyword id="KW-0648">Protein biosynthesis</keyword>
<keyword id="KW-0862">Zinc</keyword>
<gene>
    <name evidence="1" type="primary">ileS</name>
    <name type="ordered locus">Mbar_A3613</name>
</gene>
<protein>
    <recommendedName>
        <fullName evidence="1">Isoleucine--tRNA ligase</fullName>
        <ecNumber evidence="1">6.1.1.5</ecNumber>
    </recommendedName>
    <alternativeName>
        <fullName evidence="1">Isoleucyl-tRNA synthetase</fullName>
        <shortName evidence="1">IleRS</shortName>
    </alternativeName>
</protein>
<comment type="function">
    <text evidence="1">Catalyzes the attachment of isoleucine to tRNA(Ile). As IleRS can inadvertently accommodate and process structurally similar amino acids such as valine, to avoid such errors it has two additional distinct tRNA(Ile)-dependent editing activities. One activity is designated as 'pretransfer' editing and involves the hydrolysis of activated Val-AMP. The other activity is designated 'posttransfer' editing and involves deacylation of mischarged Val-tRNA(Ile).</text>
</comment>
<comment type="catalytic activity">
    <reaction evidence="1">
        <text>tRNA(Ile) + L-isoleucine + ATP = L-isoleucyl-tRNA(Ile) + AMP + diphosphate</text>
        <dbReference type="Rhea" id="RHEA:11060"/>
        <dbReference type="Rhea" id="RHEA-COMP:9666"/>
        <dbReference type="Rhea" id="RHEA-COMP:9695"/>
        <dbReference type="ChEBI" id="CHEBI:30616"/>
        <dbReference type="ChEBI" id="CHEBI:33019"/>
        <dbReference type="ChEBI" id="CHEBI:58045"/>
        <dbReference type="ChEBI" id="CHEBI:78442"/>
        <dbReference type="ChEBI" id="CHEBI:78528"/>
        <dbReference type="ChEBI" id="CHEBI:456215"/>
        <dbReference type="EC" id="6.1.1.5"/>
    </reaction>
</comment>
<comment type="cofactor">
    <cofactor evidence="1">
        <name>Zn(2+)</name>
        <dbReference type="ChEBI" id="CHEBI:29105"/>
    </cofactor>
</comment>
<comment type="subunit">
    <text evidence="1">Monomer.</text>
</comment>
<comment type="subcellular location">
    <subcellularLocation>
        <location evidence="1">Cytoplasm</location>
    </subcellularLocation>
</comment>
<comment type="domain">
    <text evidence="1">IleRS has two distinct active sites: one for aminoacylation and one for editing. The misactivated valine is translocated from the active site to the editing site, which sterically excludes the correctly activated isoleucine. The single editing site contains two valyl binding pockets, one specific for each substrate (Val-AMP or Val-tRNA(Ile)).</text>
</comment>
<comment type="similarity">
    <text evidence="1">Belongs to the class-I aminoacyl-tRNA synthetase family. IleS type 2 subfamily.</text>
</comment>